<keyword id="KW-0067">ATP-binding</keyword>
<keyword id="KW-0414">Isoprene biosynthesis</keyword>
<keyword id="KW-0418">Kinase</keyword>
<keyword id="KW-0547">Nucleotide-binding</keyword>
<keyword id="KW-1185">Reference proteome</keyword>
<keyword id="KW-0808">Transferase</keyword>
<comment type="function">
    <text evidence="1">Catalyzes the phosphorylation of the position 2 hydroxy group of 4-diphosphocytidyl-2C-methyl-D-erythritol.</text>
</comment>
<comment type="catalytic activity">
    <reaction evidence="1">
        <text>4-CDP-2-C-methyl-D-erythritol + ATP = 4-CDP-2-C-methyl-D-erythritol 2-phosphate + ADP + H(+)</text>
        <dbReference type="Rhea" id="RHEA:18437"/>
        <dbReference type="ChEBI" id="CHEBI:15378"/>
        <dbReference type="ChEBI" id="CHEBI:30616"/>
        <dbReference type="ChEBI" id="CHEBI:57823"/>
        <dbReference type="ChEBI" id="CHEBI:57919"/>
        <dbReference type="ChEBI" id="CHEBI:456216"/>
        <dbReference type="EC" id="2.7.1.148"/>
    </reaction>
</comment>
<comment type="pathway">
    <text evidence="1">Isoprenoid biosynthesis; isopentenyl diphosphate biosynthesis via DXP pathway; isopentenyl diphosphate from 1-deoxy-D-xylulose 5-phosphate: step 3/6.</text>
</comment>
<comment type="similarity">
    <text evidence="1">Belongs to the GHMP kinase family. IspE subfamily.</text>
</comment>
<sequence length="296" mass="32943">MDFIRLKSRAKINLSIDVLGKRQDGYHFVEMIMQTIDLYDIVKIKELDEDEIKVKSTSLDIPLDEDNIVYKAAKILKNKFYIKKGVEIFIEKNIPVAAGMAGGSSNAAAVLVGLNHLWELRLSEDELKEIGLNLGADVPFCISGRPALAQGIGEKLTNIKGLPCDTNILICKPDLFVSTKEVYQGLDLNNIKKRPNNKYLIECLKSEDIKAVSESMVNILENVTIGKHKEISDIKQVMMKNNALGSMMSGSGPTVFGLFKNKEDALIGKKELLKKYKQVYVVNSSQKGVEICGEFN</sequence>
<protein>
    <recommendedName>
        <fullName evidence="1">4-diphosphocytidyl-2-C-methyl-D-erythritol kinase</fullName>
        <shortName evidence="1">CMK</shortName>
        <ecNumber evidence="1">2.7.1.148</ecNumber>
    </recommendedName>
    <alternativeName>
        <fullName evidence="1">4-(cytidine-5'-diphospho)-2-C-methyl-D-erythritol kinase</fullName>
    </alternativeName>
</protein>
<evidence type="ECO:0000255" key="1">
    <source>
        <dbReference type="HAMAP-Rule" id="MF_00061"/>
    </source>
</evidence>
<dbReference type="EC" id="2.7.1.148" evidence="1"/>
<dbReference type="EMBL" id="AM180355">
    <property type="protein sequence ID" value="CAJ70472.1"/>
    <property type="molecule type" value="Genomic_DNA"/>
</dbReference>
<dbReference type="RefSeq" id="WP_009894070.1">
    <property type="nucleotide sequence ID" value="NZ_JAUPES010000007.1"/>
</dbReference>
<dbReference type="RefSeq" id="YP_001090089.1">
    <property type="nucleotide sequence ID" value="NC_009089.1"/>
</dbReference>
<dbReference type="SMR" id="Q181G8"/>
<dbReference type="STRING" id="272563.CD630_35660"/>
<dbReference type="EnsemblBacteria" id="CAJ70472">
    <property type="protein sequence ID" value="CAJ70472"/>
    <property type="gene ID" value="CD630_35660"/>
</dbReference>
<dbReference type="GeneID" id="66356031"/>
<dbReference type="KEGG" id="cdf:CD630_35660"/>
<dbReference type="KEGG" id="pdc:CDIF630_03886"/>
<dbReference type="PATRIC" id="fig|272563.120.peg.3769"/>
<dbReference type="eggNOG" id="COG1947">
    <property type="taxonomic scope" value="Bacteria"/>
</dbReference>
<dbReference type="OrthoDB" id="9809438at2"/>
<dbReference type="PhylomeDB" id="Q181G8"/>
<dbReference type="BioCyc" id="PDIF272563:G12WB-3752-MONOMER"/>
<dbReference type="UniPathway" id="UPA00056">
    <property type="reaction ID" value="UER00094"/>
</dbReference>
<dbReference type="Proteomes" id="UP000001978">
    <property type="component" value="Chromosome"/>
</dbReference>
<dbReference type="GO" id="GO:0050515">
    <property type="term" value="F:4-(cytidine 5'-diphospho)-2-C-methyl-D-erythritol kinase activity"/>
    <property type="evidence" value="ECO:0007669"/>
    <property type="project" value="UniProtKB-UniRule"/>
</dbReference>
<dbReference type="GO" id="GO:0005524">
    <property type="term" value="F:ATP binding"/>
    <property type="evidence" value="ECO:0007669"/>
    <property type="project" value="UniProtKB-UniRule"/>
</dbReference>
<dbReference type="GO" id="GO:0019288">
    <property type="term" value="P:isopentenyl diphosphate biosynthetic process, methylerythritol 4-phosphate pathway"/>
    <property type="evidence" value="ECO:0007669"/>
    <property type="project" value="UniProtKB-UniRule"/>
</dbReference>
<dbReference type="GO" id="GO:0016114">
    <property type="term" value="P:terpenoid biosynthetic process"/>
    <property type="evidence" value="ECO:0007669"/>
    <property type="project" value="InterPro"/>
</dbReference>
<dbReference type="Gene3D" id="3.30.230.10">
    <property type="match status" value="1"/>
</dbReference>
<dbReference type="Gene3D" id="3.30.70.890">
    <property type="entry name" value="GHMP kinase, C-terminal domain"/>
    <property type="match status" value="1"/>
</dbReference>
<dbReference type="HAMAP" id="MF_00061">
    <property type="entry name" value="IspE"/>
    <property type="match status" value="1"/>
</dbReference>
<dbReference type="InterPro" id="IPR013750">
    <property type="entry name" value="GHMP_kinase_C_dom"/>
</dbReference>
<dbReference type="InterPro" id="IPR036554">
    <property type="entry name" value="GHMP_kinase_C_sf"/>
</dbReference>
<dbReference type="InterPro" id="IPR006204">
    <property type="entry name" value="GHMP_kinase_N_dom"/>
</dbReference>
<dbReference type="InterPro" id="IPR004424">
    <property type="entry name" value="IspE"/>
</dbReference>
<dbReference type="InterPro" id="IPR020568">
    <property type="entry name" value="Ribosomal_Su5_D2-typ_SF"/>
</dbReference>
<dbReference type="InterPro" id="IPR014721">
    <property type="entry name" value="Ribsml_uS5_D2-typ_fold_subgr"/>
</dbReference>
<dbReference type="NCBIfam" id="TIGR00154">
    <property type="entry name" value="ispE"/>
    <property type="match status" value="1"/>
</dbReference>
<dbReference type="NCBIfam" id="NF011202">
    <property type="entry name" value="PRK14608.1"/>
    <property type="match status" value="1"/>
</dbReference>
<dbReference type="PANTHER" id="PTHR43527">
    <property type="entry name" value="4-DIPHOSPHOCYTIDYL-2-C-METHYL-D-ERYTHRITOL KINASE, CHLOROPLASTIC"/>
    <property type="match status" value="1"/>
</dbReference>
<dbReference type="PANTHER" id="PTHR43527:SF2">
    <property type="entry name" value="4-DIPHOSPHOCYTIDYL-2-C-METHYL-D-ERYTHRITOL KINASE, CHLOROPLASTIC"/>
    <property type="match status" value="1"/>
</dbReference>
<dbReference type="Pfam" id="PF08544">
    <property type="entry name" value="GHMP_kinases_C"/>
    <property type="match status" value="1"/>
</dbReference>
<dbReference type="Pfam" id="PF00288">
    <property type="entry name" value="GHMP_kinases_N"/>
    <property type="match status" value="1"/>
</dbReference>
<dbReference type="PIRSF" id="PIRSF010376">
    <property type="entry name" value="IspE"/>
    <property type="match status" value="1"/>
</dbReference>
<dbReference type="PRINTS" id="PR00958">
    <property type="entry name" value="HOMSERKINASE"/>
</dbReference>
<dbReference type="SUPFAM" id="SSF55060">
    <property type="entry name" value="GHMP Kinase, C-terminal domain"/>
    <property type="match status" value="1"/>
</dbReference>
<dbReference type="SUPFAM" id="SSF54211">
    <property type="entry name" value="Ribosomal protein S5 domain 2-like"/>
    <property type="match status" value="1"/>
</dbReference>
<reference key="1">
    <citation type="journal article" date="2006" name="Nat. Genet.">
        <title>The multidrug-resistant human pathogen Clostridium difficile has a highly mobile, mosaic genome.</title>
        <authorList>
            <person name="Sebaihia M."/>
            <person name="Wren B.W."/>
            <person name="Mullany P."/>
            <person name="Fairweather N.F."/>
            <person name="Minton N."/>
            <person name="Stabler R."/>
            <person name="Thomson N.R."/>
            <person name="Roberts A.P."/>
            <person name="Cerdeno-Tarraga A.M."/>
            <person name="Wang H."/>
            <person name="Holden M.T.G."/>
            <person name="Wright A."/>
            <person name="Churcher C."/>
            <person name="Quail M.A."/>
            <person name="Baker S."/>
            <person name="Bason N."/>
            <person name="Brooks K."/>
            <person name="Chillingworth T."/>
            <person name="Cronin A."/>
            <person name="Davis P."/>
            <person name="Dowd L."/>
            <person name="Fraser A."/>
            <person name="Feltwell T."/>
            <person name="Hance Z."/>
            <person name="Holroyd S."/>
            <person name="Jagels K."/>
            <person name="Moule S."/>
            <person name="Mungall K."/>
            <person name="Price C."/>
            <person name="Rabbinowitsch E."/>
            <person name="Sharp S."/>
            <person name="Simmonds M."/>
            <person name="Stevens K."/>
            <person name="Unwin L."/>
            <person name="Whithead S."/>
            <person name="Dupuy B."/>
            <person name="Dougan G."/>
            <person name="Barrell B."/>
            <person name="Parkhill J."/>
        </authorList>
    </citation>
    <scope>NUCLEOTIDE SEQUENCE [LARGE SCALE GENOMIC DNA]</scope>
    <source>
        <strain>630</strain>
    </source>
</reference>
<feature type="chain" id="PRO_1000092080" description="4-diphosphocytidyl-2-C-methyl-D-erythritol kinase">
    <location>
        <begin position="1"/>
        <end position="296"/>
    </location>
</feature>
<feature type="active site" evidence="1">
    <location>
        <position position="11"/>
    </location>
</feature>
<feature type="active site" evidence="1">
    <location>
        <position position="137"/>
    </location>
</feature>
<feature type="binding site" evidence="1">
    <location>
        <begin position="95"/>
        <end position="105"/>
    </location>
    <ligand>
        <name>ATP</name>
        <dbReference type="ChEBI" id="CHEBI:30616"/>
    </ligand>
</feature>
<gene>
    <name evidence="1" type="primary">ispE</name>
    <name type="ordered locus">CD630_35660</name>
</gene>
<organism>
    <name type="scientific">Clostridioides difficile (strain 630)</name>
    <name type="common">Peptoclostridium difficile</name>
    <dbReference type="NCBI Taxonomy" id="272563"/>
    <lineage>
        <taxon>Bacteria</taxon>
        <taxon>Bacillati</taxon>
        <taxon>Bacillota</taxon>
        <taxon>Clostridia</taxon>
        <taxon>Peptostreptococcales</taxon>
        <taxon>Peptostreptococcaceae</taxon>
        <taxon>Clostridioides</taxon>
    </lineage>
</organism>
<name>ISPE_CLOD6</name>
<proteinExistence type="inferred from homology"/>
<accession>Q181G8</accession>